<keyword id="KW-0072">Autophagy</keyword>
<keyword id="KW-0446">Lipid-binding</keyword>
<keyword id="KW-0472">Membrane</keyword>
<keyword id="KW-1185">Reference proteome</keyword>
<keyword id="KW-0677">Repeat</keyword>
<keyword id="KW-0853">WD repeat</keyword>
<accession>Q7ZWU5</accession>
<evidence type="ECO:0000250" key="1">
    <source>
        <dbReference type="UniProtKB" id="Q9Y4P8"/>
    </source>
</evidence>
<evidence type="ECO:0000255" key="2"/>
<evidence type="ECO:0000256" key="3">
    <source>
        <dbReference type="SAM" id="MobiDB-lite"/>
    </source>
</evidence>
<evidence type="ECO:0000305" key="4"/>
<protein>
    <recommendedName>
        <fullName>WD repeat domain phosphoinositide-interacting protein 2</fullName>
        <shortName>WIPI-2</shortName>
    </recommendedName>
</protein>
<name>WIPI2_XENLA</name>
<gene>
    <name type="primary">wipi2</name>
</gene>
<reference key="1">
    <citation type="submission" date="2003-02" db="EMBL/GenBank/DDBJ databases">
        <authorList>
            <consortium name="NIH - Xenopus Gene Collection (XGC) project"/>
        </authorList>
    </citation>
    <scope>NUCLEOTIDE SEQUENCE [LARGE SCALE MRNA]</scope>
    <source>
        <tissue>Embryo</tissue>
    </source>
</reference>
<proteinExistence type="evidence at transcript level"/>
<comment type="function">
    <text evidence="1">Component of the autophagy machinery that controls the major intracellular degradation process by which cytoplasmic materials are packaged into autophagosomes and delivered to lysosomes for degradation. Involved in an early step of the formation of preautophagosomal structures.</text>
</comment>
<comment type="subcellular location">
    <subcellularLocation>
        <location evidence="1">Preautophagosomal structure membrane</location>
        <topology evidence="1">Peripheral membrane protein</topology>
        <orientation evidence="1">Cytoplasmic side</orientation>
    </subcellularLocation>
</comment>
<comment type="domain">
    <text evidence="1">The L/FRRG motif is required for recruitment to PtdIns3P.</text>
</comment>
<comment type="similarity">
    <text evidence="4">Belongs to the WD repeat PROPPIN family.</text>
</comment>
<sequence length="435" mass="47693">MNLASQSVDAGAGQLLFANFNQDNTSLAVGSKSGYKFFSLSSVDKLEQIYECTDTEDVCIVERLFSSSLVAIVSLKAPRKLKVCHFKKGTEICNYSYSNTTLAVKLNRQRLIVCLEESLYIHNIRDMKVLHTIRETPPNPSGLCSLSINGENCYLAYPGSASIGEVQVFDTVNLRAANMIPAHDSPLAALAFDASGTKLATASEKGTVIRVFSIPEGQKLFEFRRGVKRCVSICSLAFSMDSIFLSASSNTETVHIFKLETIKEKPPEEPTSWTGYFGRVIMASTSYLPSQVTEMFNQGRAFATVRLPFCGHKNICALATIQKISRLLVGAADGYLYIYNFDPQEGGECTLMKQHKLDGSMEPSSEILESSSHDRQVGAQTYSATVTKTYPPPSPTRHAYADDLGAVGGASEEDEMGNLRLDEDNENPPMILQTE</sequence>
<organism>
    <name type="scientific">Xenopus laevis</name>
    <name type="common">African clawed frog</name>
    <dbReference type="NCBI Taxonomy" id="8355"/>
    <lineage>
        <taxon>Eukaryota</taxon>
        <taxon>Metazoa</taxon>
        <taxon>Chordata</taxon>
        <taxon>Craniata</taxon>
        <taxon>Vertebrata</taxon>
        <taxon>Euteleostomi</taxon>
        <taxon>Amphibia</taxon>
        <taxon>Batrachia</taxon>
        <taxon>Anura</taxon>
        <taxon>Pipoidea</taxon>
        <taxon>Pipidae</taxon>
        <taxon>Xenopodinae</taxon>
        <taxon>Xenopus</taxon>
        <taxon>Xenopus</taxon>
    </lineage>
</organism>
<dbReference type="EMBL" id="BC046705">
    <property type="protein sequence ID" value="AAH46705.1"/>
    <property type="molecule type" value="mRNA"/>
</dbReference>
<dbReference type="RefSeq" id="NP_001080319.1">
    <property type="nucleotide sequence ID" value="NM_001086850.1"/>
</dbReference>
<dbReference type="SMR" id="Q7ZWU5"/>
<dbReference type="DNASU" id="380011"/>
<dbReference type="GeneID" id="380011"/>
<dbReference type="KEGG" id="xla:380011"/>
<dbReference type="AGR" id="Xenbase:XB-GENE-6084336"/>
<dbReference type="CTD" id="380011"/>
<dbReference type="Xenbase" id="XB-GENE-6084336">
    <property type="gene designation" value="wipi2.L"/>
</dbReference>
<dbReference type="OrthoDB" id="1667587at2759"/>
<dbReference type="Proteomes" id="UP000186698">
    <property type="component" value="Chromosome 9_10L"/>
</dbReference>
<dbReference type="Bgee" id="380011">
    <property type="expression patterns" value="Expressed in brain and 19 other cell types or tissues"/>
</dbReference>
<dbReference type="GO" id="GO:0005829">
    <property type="term" value="C:cytosol"/>
    <property type="evidence" value="ECO:0000250"/>
    <property type="project" value="UniProtKB"/>
</dbReference>
<dbReference type="GO" id="GO:0034045">
    <property type="term" value="C:phagophore assembly site membrane"/>
    <property type="evidence" value="ECO:0000250"/>
    <property type="project" value="UniProtKB"/>
</dbReference>
<dbReference type="GO" id="GO:0080025">
    <property type="term" value="F:phosphatidylinositol-3,5-bisphosphate binding"/>
    <property type="evidence" value="ECO:0000250"/>
    <property type="project" value="UniProtKB"/>
</dbReference>
<dbReference type="GO" id="GO:0032266">
    <property type="term" value="F:phosphatidylinositol-3-phosphate binding"/>
    <property type="evidence" value="ECO:0000250"/>
    <property type="project" value="UniProtKB"/>
</dbReference>
<dbReference type="GO" id="GO:0030674">
    <property type="term" value="F:protein-macromolecule adaptor activity"/>
    <property type="evidence" value="ECO:0000318"/>
    <property type="project" value="GO_Central"/>
</dbReference>
<dbReference type="GO" id="GO:0000045">
    <property type="term" value="P:autophagosome assembly"/>
    <property type="evidence" value="ECO:0000250"/>
    <property type="project" value="UniProtKB"/>
</dbReference>
<dbReference type="GO" id="GO:0000422">
    <property type="term" value="P:autophagy of mitochondrion"/>
    <property type="evidence" value="ECO:0000318"/>
    <property type="project" value="GO_Central"/>
</dbReference>
<dbReference type="GO" id="GO:0009267">
    <property type="term" value="P:cellular response to starvation"/>
    <property type="evidence" value="ECO:0000250"/>
    <property type="project" value="UniProtKB"/>
</dbReference>
<dbReference type="GO" id="GO:0061723">
    <property type="term" value="P:glycophagy"/>
    <property type="evidence" value="ECO:0000318"/>
    <property type="project" value="GO_Central"/>
</dbReference>
<dbReference type="GO" id="GO:0044804">
    <property type="term" value="P:nucleophagy"/>
    <property type="evidence" value="ECO:0000318"/>
    <property type="project" value="GO_Central"/>
</dbReference>
<dbReference type="GO" id="GO:0000425">
    <property type="term" value="P:pexophagy"/>
    <property type="evidence" value="ECO:0000318"/>
    <property type="project" value="GO_Central"/>
</dbReference>
<dbReference type="GO" id="GO:0034497">
    <property type="term" value="P:protein localization to phagophore assembly site"/>
    <property type="evidence" value="ECO:0000250"/>
    <property type="project" value="UniProtKB"/>
</dbReference>
<dbReference type="FunFam" id="2.130.10.10:FF:000145">
    <property type="entry name" value="WD repeat domain phosphoinositide-interacting protein 2"/>
    <property type="match status" value="1"/>
</dbReference>
<dbReference type="Gene3D" id="2.130.10.10">
    <property type="entry name" value="YVTN repeat-like/Quinoprotein amine dehydrogenase"/>
    <property type="match status" value="1"/>
</dbReference>
<dbReference type="InterPro" id="IPR048720">
    <property type="entry name" value="PROPPIN"/>
</dbReference>
<dbReference type="InterPro" id="IPR015943">
    <property type="entry name" value="WD40/YVTN_repeat-like_dom_sf"/>
</dbReference>
<dbReference type="InterPro" id="IPR036322">
    <property type="entry name" value="WD40_repeat_dom_sf"/>
</dbReference>
<dbReference type="InterPro" id="IPR001680">
    <property type="entry name" value="WD40_rpt"/>
</dbReference>
<dbReference type="PANTHER" id="PTHR11227">
    <property type="entry name" value="WD-REPEAT PROTEIN INTERACTING WITH PHOSPHOINOSIDES WIPI -RELATED"/>
    <property type="match status" value="1"/>
</dbReference>
<dbReference type="Pfam" id="PF21032">
    <property type="entry name" value="PROPPIN"/>
    <property type="match status" value="1"/>
</dbReference>
<dbReference type="SMART" id="SM00320">
    <property type="entry name" value="WD40"/>
    <property type="match status" value="3"/>
</dbReference>
<dbReference type="SUPFAM" id="SSF50978">
    <property type="entry name" value="WD40 repeat-like"/>
    <property type="match status" value="1"/>
</dbReference>
<feature type="chain" id="PRO_0000051444" description="WD repeat domain phosphoinositide-interacting protein 2">
    <location>
        <begin position="1"/>
        <end position="435"/>
    </location>
</feature>
<feature type="repeat" description="WD 1" evidence="2">
    <location>
        <begin position="182"/>
        <end position="222"/>
    </location>
</feature>
<feature type="repeat" description="WD 2" evidence="2">
    <location>
        <begin position="228"/>
        <end position="267"/>
    </location>
</feature>
<feature type="repeat" description="WD 3" evidence="2">
    <location>
        <begin position="311"/>
        <end position="349"/>
    </location>
</feature>
<feature type="region of interest" description="Disordered" evidence="3">
    <location>
        <begin position="386"/>
        <end position="435"/>
    </location>
</feature>
<feature type="short sequence motif" description="L/FRRG motif" evidence="1">
    <location>
        <begin position="223"/>
        <end position="226"/>
    </location>
</feature>